<feature type="transit peptide" description="Mitochondrion" evidence="2">
    <location>
        <begin position="1"/>
        <end position="37"/>
    </location>
</feature>
<feature type="chain" id="PRO_0000416850" description="Probable gamma-aminobutyrate transaminase 2, mitochondrial">
    <location>
        <begin position="38"/>
        <end position="497"/>
    </location>
</feature>
<feature type="binding site" evidence="1">
    <location>
        <begin position="153"/>
        <end position="154"/>
    </location>
    <ligand>
        <name>pyridoxal 5'-phosphate</name>
        <dbReference type="ChEBI" id="CHEBI:597326"/>
    </ligand>
</feature>
<feature type="binding site" evidence="1">
    <location>
        <position position="186"/>
    </location>
    <ligand>
        <name>substrate</name>
    </ligand>
</feature>
<feature type="binding site" evidence="1">
    <location>
        <position position="293"/>
    </location>
    <ligand>
        <name>pyridoxal 5'-phosphate</name>
        <dbReference type="ChEBI" id="CHEBI:597326"/>
    </ligand>
</feature>
<feature type="binding site" evidence="1">
    <location>
        <position position="322"/>
    </location>
    <ligand>
        <name>substrate</name>
    </ligand>
</feature>
<feature type="modified residue" description="N6-(pyridoxal phosphate)lysine" evidence="1">
    <location>
        <position position="322"/>
    </location>
</feature>
<organism>
    <name type="scientific">Oryza sativa subsp. japonica</name>
    <name type="common">Rice</name>
    <dbReference type="NCBI Taxonomy" id="39947"/>
    <lineage>
        <taxon>Eukaryota</taxon>
        <taxon>Viridiplantae</taxon>
        <taxon>Streptophyta</taxon>
        <taxon>Embryophyta</taxon>
        <taxon>Tracheophyta</taxon>
        <taxon>Spermatophyta</taxon>
        <taxon>Magnoliopsida</taxon>
        <taxon>Liliopsida</taxon>
        <taxon>Poales</taxon>
        <taxon>Poaceae</taxon>
        <taxon>BOP clade</taxon>
        <taxon>Oryzoideae</taxon>
        <taxon>Oryzeae</taxon>
        <taxon>Oryzinae</taxon>
        <taxon>Oryza</taxon>
        <taxon>Oryza sativa</taxon>
    </lineage>
</organism>
<comment type="function">
    <text evidence="1">Transaminase that degrades gamma-amino butyric acid (GABA).</text>
</comment>
<comment type="catalytic activity">
    <reaction>
        <text>4-aminobutanoate + pyruvate = succinate semialdehyde + L-alanine</text>
        <dbReference type="Rhea" id="RHEA:32263"/>
        <dbReference type="ChEBI" id="CHEBI:15361"/>
        <dbReference type="ChEBI" id="CHEBI:57706"/>
        <dbReference type="ChEBI" id="CHEBI:57972"/>
        <dbReference type="ChEBI" id="CHEBI:59888"/>
        <dbReference type="EC" id="2.6.1.96"/>
    </reaction>
</comment>
<comment type="catalytic activity">
    <reaction>
        <text>4-aminobutanoate + glyoxylate = succinate semialdehyde + glycine</text>
        <dbReference type="Rhea" id="RHEA:32267"/>
        <dbReference type="ChEBI" id="CHEBI:36655"/>
        <dbReference type="ChEBI" id="CHEBI:57305"/>
        <dbReference type="ChEBI" id="CHEBI:57706"/>
        <dbReference type="ChEBI" id="CHEBI:59888"/>
        <dbReference type="EC" id="2.6.1.96"/>
    </reaction>
</comment>
<comment type="subcellular location">
    <subcellularLocation>
        <location evidence="3">Mitochondrion</location>
    </subcellularLocation>
</comment>
<comment type="similarity">
    <text evidence="3">Belongs to the class-III pyridoxal-phosphate-dependent aminotransferase family.</text>
</comment>
<accession>Q7XN12</accession>
<accession>A0A0P0WF20</accession>
<reference key="1">
    <citation type="journal article" date="2002" name="Nature">
        <title>Sequence and analysis of rice chromosome 4.</title>
        <authorList>
            <person name="Feng Q."/>
            <person name="Zhang Y."/>
            <person name="Hao P."/>
            <person name="Wang S."/>
            <person name="Fu G."/>
            <person name="Huang Y."/>
            <person name="Li Y."/>
            <person name="Zhu J."/>
            <person name="Liu Y."/>
            <person name="Hu X."/>
            <person name="Jia P."/>
            <person name="Zhang Y."/>
            <person name="Zhao Q."/>
            <person name="Ying K."/>
            <person name="Yu S."/>
            <person name="Tang Y."/>
            <person name="Weng Q."/>
            <person name="Zhang L."/>
            <person name="Lu Y."/>
            <person name="Mu J."/>
            <person name="Lu Y."/>
            <person name="Zhang L.S."/>
            <person name="Yu Z."/>
            <person name="Fan D."/>
            <person name="Liu X."/>
            <person name="Lu T."/>
            <person name="Li C."/>
            <person name="Wu Y."/>
            <person name="Sun T."/>
            <person name="Lei H."/>
            <person name="Li T."/>
            <person name="Hu H."/>
            <person name="Guan J."/>
            <person name="Wu M."/>
            <person name="Zhang R."/>
            <person name="Zhou B."/>
            <person name="Chen Z."/>
            <person name="Chen L."/>
            <person name="Jin Z."/>
            <person name="Wang R."/>
            <person name="Yin H."/>
            <person name="Cai Z."/>
            <person name="Ren S."/>
            <person name="Lv G."/>
            <person name="Gu W."/>
            <person name="Zhu G."/>
            <person name="Tu Y."/>
            <person name="Jia J."/>
            <person name="Zhang Y."/>
            <person name="Chen J."/>
            <person name="Kang H."/>
            <person name="Chen X."/>
            <person name="Shao C."/>
            <person name="Sun Y."/>
            <person name="Hu Q."/>
            <person name="Zhang X."/>
            <person name="Zhang W."/>
            <person name="Wang L."/>
            <person name="Ding C."/>
            <person name="Sheng H."/>
            <person name="Gu J."/>
            <person name="Chen S."/>
            <person name="Ni L."/>
            <person name="Zhu F."/>
            <person name="Chen W."/>
            <person name="Lan L."/>
            <person name="Lai Y."/>
            <person name="Cheng Z."/>
            <person name="Gu M."/>
            <person name="Jiang J."/>
            <person name="Li J."/>
            <person name="Hong G."/>
            <person name="Xue Y."/>
            <person name="Han B."/>
        </authorList>
    </citation>
    <scope>NUCLEOTIDE SEQUENCE [LARGE SCALE GENOMIC DNA]</scope>
    <source>
        <strain>cv. Nipponbare</strain>
    </source>
</reference>
<reference key="2">
    <citation type="journal article" date="2005" name="Nature">
        <title>The map-based sequence of the rice genome.</title>
        <authorList>
            <consortium name="International rice genome sequencing project (IRGSP)"/>
        </authorList>
    </citation>
    <scope>NUCLEOTIDE SEQUENCE [LARGE SCALE GENOMIC DNA]</scope>
    <source>
        <strain>cv. Nipponbare</strain>
    </source>
</reference>
<reference key="3">
    <citation type="journal article" date="2008" name="Nucleic Acids Res.">
        <title>The rice annotation project database (RAP-DB): 2008 update.</title>
        <authorList>
            <consortium name="The rice annotation project (RAP)"/>
        </authorList>
    </citation>
    <scope>GENOME REANNOTATION</scope>
    <source>
        <strain>cv. Nipponbare</strain>
    </source>
</reference>
<reference key="4">
    <citation type="journal article" date="2013" name="Rice">
        <title>Improvement of the Oryza sativa Nipponbare reference genome using next generation sequence and optical map data.</title>
        <authorList>
            <person name="Kawahara Y."/>
            <person name="de la Bastide M."/>
            <person name="Hamilton J.P."/>
            <person name="Kanamori H."/>
            <person name="McCombie W.R."/>
            <person name="Ouyang S."/>
            <person name="Schwartz D.C."/>
            <person name="Tanaka T."/>
            <person name="Wu J."/>
            <person name="Zhou S."/>
            <person name="Childs K.L."/>
            <person name="Davidson R.M."/>
            <person name="Lin H."/>
            <person name="Quesada-Ocampo L."/>
            <person name="Vaillancourt B."/>
            <person name="Sakai H."/>
            <person name="Lee S.S."/>
            <person name="Kim J."/>
            <person name="Numa H."/>
            <person name="Itoh T."/>
            <person name="Buell C.R."/>
            <person name="Matsumoto T."/>
        </authorList>
    </citation>
    <scope>GENOME REANNOTATION</scope>
    <source>
        <strain>cv. Nipponbare</strain>
    </source>
</reference>
<reference key="5">
    <citation type="journal article" date="2003" name="Science">
        <title>Collection, mapping, and annotation of over 28,000 cDNA clones from japonica rice.</title>
        <authorList>
            <consortium name="The rice full-length cDNA consortium"/>
        </authorList>
    </citation>
    <scope>NUCLEOTIDE SEQUENCE [LARGE SCALE MRNA]</scope>
    <source>
        <strain>cv. Nipponbare</strain>
    </source>
</reference>
<evidence type="ECO:0000250" key="1"/>
<evidence type="ECO:0000255" key="2"/>
<evidence type="ECO:0000305" key="3"/>
<dbReference type="EC" id="2.6.1.96"/>
<dbReference type="EMBL" id="AL662950">
    <property type="protein sequence ID" value="CAE04332.2"/>
    <property type="molecule type" value="Genomic_DNA"/>
</dbReference>
<dbReference type="EMBL" id="AP008210">
    <property type="protein sequence ID" value="BAF15776.1"/>
    <property type="molecule type" value="Genomic_DNA"/>
</dbReference>
<dbReference type="EMBL" id="AP014960">
    <property type="protein sequence ID" value="BAS90991.1"/>
    <property type="molecule type" value="Genomic_DNA"/>
</dbReference>
<dbReference type="EMBL" id="AK100259">
    <property type="protein sequence ID" value="BAG94519.1"/>
    <property type="molecule type" value="mRNA"/>
</dbReference>
<dbReference type="RefSeq" id="XP_015635718.1">
    <property type="nucleotide sequence ID" value="XM_015780232.1"/>
</dbReference>
<dbReference type="SMR" id="Q7XN12"/>
<dbReference type="FunCoup" id="Q7XN12">
    <property type="interactions" value="768"/>
</dbReference>
<dbReference type="STRING" id="39947.Q7XN12"/>
<dbReference type="PaxDb" id="39947-Q7XN12"/>
<dbReference type="EnsemblPlants" id="Os04t0614500-01">
    <property type="protein sequence ID" value="Os04t0614500-01"/>
    <property type="gene ID" value="Os04g0614500"/>
</dbReference>
<dbReference type="Gramene" id="Os04t0614500-01">
    <property type="protein sequence ID" value="Os04t0614500-01"/>
    <property type="gene ID" value="Os04g0614500"/>
</dbReference>
<dbReference type="KEGG" id="dosa:Os04g0614500"/>
<dbReference type="eggNOG" id="KOG1404">
    <property type="taxonomic scope" value="Eukaryota"/>
</dbReference>
<dbReference type="HOGENOM" id="CLU_016922_4_1_1"/>
<dbReference type="InParanoid" id="Q7XN12"/>
<dbReference type="OMA" id="GYFHFSS"/>
<dbReference type="OrthoDB" id="425114at2759"/>
<dbReference type="BRENDA" id="2.6.1.96">
    <property type="organism ID" value="4460"/>
</dbReference>
<dbReference type="Proteomes" id="UP000000763">
    <property type="component" value="Chromosome 4"/>
</dbReference>
<dbReference type="Proteomes" id="UP000059680">
    <property type="component" value="Chromosome 4"/>
</dbReference>
<dbReference type="GO" id="GO:0005739">
    <property type="term" value="C:mitochondrion"/>
    <property type="evidence" value="ECO:0007669"/>
    <property type="project" value="UniProtKB-SubCell"/>
</dbReference>
<dbReference type="GO" id="GO:0034387">
    <property type="term" value="F:4-aminobutyrate:pyruvate transaminase activity"/>
    <property type="evidence" value="ECO:0007669"/>
    <property type="project" value="UniProtKB-EC"/>
</dbReference>
<dbReference type="GO" id="GO:0004015">
    <property type="term" value="F:adenosylmethionine-8-amino-7-oxononanoate transaminase activity"/>
    <property type="evidence" value="ECO:0000318"/>
    <property type="project" value="GO_Central"/>
</dbReference>
<dbReference type="GO" id="GO:0030170">
    <property type="term" value="F:pyridoxal phosphate binding"/>
    <property type="evidence" value="ECO:0007669"/>
    <property type="project" value="InterPro"/>
</dbReference>
<dbReference type="GO" id="GO:0009102">
    <property type="term" value="P:biotin biosynthetic process"/>
    <property type="evidence" value="ECO:0000318"/>
    <property type="project" value="GO_Central"/>
</dbReference>
<dbReference type="GO" id="GO:0009448">
    <property type="term" value="P:gamma-aminobutyric acid metabolic process"/>
    <property type="evidence" value="ECO:0000318"/>
    <property type="project" value="GO_Central"/>
</dbReference>
<dbReference type="CDD" id="cd00610">
    <property type="entry name" value="OAT_like"/>
    <property type="match status" value="1"/>
</dbReference>
<dbReference type="FunFam" id="3.40.640.10:FF:000014">
    <property type="entry name" value="Adenosylmethionine-8-amino-7-oxononanoate aminotransferase, probable"/>
    <property type="match status" value="1"/>
</dbReference>
<dbReference type="Gene3D" id="3.90.1150.10">
    <property type="entry name" value="Aspartate Aminotransferase, domain 1"/>
    <property type="match status" value="1"/>
</dbReference>
<dbReference type="Gene3D" id="3.40.640.10">
    <property type="entry name" value="Type I PLP-dependent aspartate aminotransferase-like (Major domain)"/>
    <property type="match status" value="1"/>
</dbReference>
<dbReference type="InterPro" id="IPR005814">
    <property type="entry name" value="Aminotrans_3"/>
</dbReference>
<dbReference type="InterPro" id="IPR049704">
    <property type="entry name" value="Aminotrans_3_PPA_site"/>
</dbReference>
<dbReference type="InterPro" id="IPR015424">
    <property type="entry name" value="PyrdxlP-dep_Trfase"/>
</dbReference>
<dbReference type="InterPro" id="IPR015421">
    <property type="entry name" value="PyrdxlP-dep_Trfase_major"/>
</dbReference>
<dbReference type="InterPro" id="IPR015422">
    <property type="entry name" value="PyrdxlP-dep_Trfase_small"/>
</dbReference>
<dbReference type="NCBIfam" id="NF004767">
    <property type="entry name" value="PRK06105.1"/>
    <property type="match status" value="1"/>
</dbReference>
<dbReference type="PANTHER" id="PTHR42684">
    <property type="entry name" value="ADENOSYLMETHIONINE-8-AMINO-7-OXONONANOATE AMINOTRANSFERASE"/>
    <property type="match status" value="1"/>
</dbReference>
<dbReference type="PANTHER" id="PTHR42684:SF20">
    <property type="entry name" value="GAMMA-AMINOBUTYRATE TRANSAMINASE 1, MITOCHONDRIAL"/>
    <property type="match status" value="1"/>
</dbReference>
<dbReference type="Pfam" id="PF00202">
    <property type="entry name" value="Aminotran_3"/>
    <property type="match status" value="1"/>
</dbReference>
<dbReference type="PIRSF" id="PIRSF000521">
    <property type="entry name" value="Transaminase_4ab_Lys_Orn"/>
    <property type="match status" value="1"/>
</dbReference>
<dbReference type="SUPFAM" id="SSF53383">
    <property type="entry name" value="PLP-dependent transferases"/>
    <property type="match status" value="1"/>
</dbReference>
<dbReference type="PROSITE" id="PS00600">
    <property type="entry name" value="AA_TRANSFER_CLASS_3"/>
    <property type="match status" value="1"/>
</dbReference>
<sequence>MNLIKHAAFAASFQGETDCTSHASARKFSTSGSSPLLDSTEGNGFKGHSMLAPFTAGWHSTDLEPLIIERSEGSYVYDSKGNKYLDTLAGLWCTALGGSEPRLVKAATDQLNKLPFYHSFWNSTAKPPLDLAEELISMFTAKEMGKVFFTNSGSEANDSQVKLVWYYNNALGRPNKKKIIAQSQAYHGSTLISASLSGLPAMHLKFDLPAPFVLHTDCPHYWRFGLPGEAEEEFATRLADNLENLILKEGPETVAAFIAEPVIGAGGVIPPPKTYFEKIQAVLQKYDVLFIADEVITGFGRLGTMFGSDLYNIKPDLVSLAKALSSAYVPIGATLVSPEISDVVHSQSNKIGFFAHGFTYSGHPVSCAVALEALKIYRERNIPAHVKQISPRFQEGIKAFAGSSIIGETRGVGLLLATEFANNKSPNDPFPVEWGVAQIFGAECKKRGMLVKVVGDEIAMSPPLIMSQREVDGLVSIYGEALKATEERVAELRSKKK</sequence>
<gene>
    <name type="ordered locus">Os04g0614500</name>
    <name type="ordered locus">LOC_Os04g52440</name>
    <name type="ORF">OSJNBa0008M17.3</name>
</gene>
<name>GATP2_ORYSJ</name>
<keyword id="KW-0032">Aminotransferase</keyword>
<keyword id="KW-0496">Mitochondrion</keyword>
<keyword id="KW-0663">Pyridoxal phosphate</keyword>
<keyword id="KW-1185">Reference proteome</keyword>
<keyword id="KW-0808">Transferase</keyword>
<keyword id="KW-0809">Transit peptide</keyword>
<proteinExistence type="evidence at transcript level"/>
<protein>
    <recommendedName>
        <fullName>Probable gamma-aminobutyrate transaminase 2, mitochondrial</fullName>
        <ecNumber>2.6.1.96</ecNumber>
    </recommendedName>
</protein>